<sequence length="182" mass="20348">MFKKFEEKDSISSIQQLKSSVQKGIRAKLLEAYPKLESHIDLILPKKDSYRIAKCHDHIELLLNGAGDQVFFRHRDGPWMPTLRLLHKFPYFVTMQQVDKGAIRFVLSGANVMCPGLTSPGACMTPADKDTVVAIMAEGKEHALAVGLLTLSTQEILAKNKGIGIETYHFLNDGLWKSKPVK</sequence>
<protein>
    <recommendedName>
        <fullName evidence="5">Malignant T-cell-amplified sequence 1 homolog</fullName>
    </recommendedName>
    <alternativeName>
        <fullName evidence="5">Multiple copies in T-cell lymphoma 1 homolog</fullName>
        <shortName evidence="4">MCT-1</shortName>
    </alternativeName>
</protein>
<comment type="function">
    <text evidence="3">Regulates translation as part of a complex with DENR. Specifically required for translational re-initiation in mRNAs containing upstream open reading frames (uORFs). Not required for standard translational initiation. Regulates expression of a subset of gene products including mbc, InR and EcR.</text>
</comment>
<comment type="subunit">
    <text evidence="3">Interacts with DENR.</text>
</comment>
<comment type="interaction">
    <interactant intactId="EBI-175444">
        <id>Q9W445</id>
    </interactant>
    <interactant intactId="EBI-184858">
        <id>Q9VX98</id>
        <label>DENR</label>
    </interactant>
    <organismsDiffer>false</organismsDiffer>
    <experiments>2</experiments>
</comment>
<comment type="subcellular location">
    <subcellularLocation>
        <location evidence="1">Cytoplasm</location>
    </subcellularLocation>
</comment>
<comment type="disruption phenotype">
    <text evidence="3">RNAi-mediated knockdown results in pupal lethality. The abdominal epidermis is soft and transparent whereas the head and thorax appear normal.</text>
</comment>
<comment type="similarity">
    <text evidence="5">Belongs to the MCTS1 family.</text>
</comment>
<organism evidence="6">
    <name type="scientific">Drosophila melanogaster</name>
    <name type="common">Fruit fly</name>
    <dbReference type="NCBI Taxonomy" id="7227"/>
    <lineage>
        <taxon>Eukaryota</taxon>
        <taxon>Metazoa</taxon>
        <taxon>Ecdysozoa</taxon>
        <taxon>Arthropoda</taxon>
        <taxon>Hexapoda</taxon>
        <taxon>Insecta</taxon>
        <taxon>Pterygota</taxon>
        <taxon>Neoptera</taxon>
        <taxon>Endopterygota</taxon>
        <taxon>Diptera</taxon>
        <taxon>Brachycera</taxon>
        <taxon>Muscomorpha</taxon>
        <taxon>Ephydroidea</taxon>
        <taxon>Drosophilidae</taxon>
        <taxon>Drosophila</taxon>
        <taxon>Sophophora</taxon>
    </lineage>
</organism>
<dbReference type="EMBL" id="AE014298">
    <property type="protein sequence ID" value="AAF46114.1"/>
    <property type="molecule type" value="Genomic_DNA"/>
</dbReference>
<dbReference type="EMBL" id="AE014298">
    <property type="protein sequence ID" value="AFH07255.1"/>
    <property type="molecule type" value="Genomic_DNA"/>
</dbReference>
<dbReference type="EMBL" id="AY051886">
    <property type="protein sequence ID" value="AAK93310.1"/>
    <property type="molecule type" value="mRNA"/>
</dbReference>
<dbReference type="RefSeq" id="NP_001245541.1">
    <property type="nucleotide sequence ID" value="NM_001258612.2"/>
</dbReference>
<dbReference type="RefSeq" id="NP_572288.1">
    <property type="nucleotide sequence ID" value="NM_132060.4"/>
</dbReference>
<dbReference type="SMR" id="Q9W445"/>
<dbReference type="FunCoup" id="Q9W445">
    <property type="interactions" value="777"/>
</dbReference>
<dbReference type="IntAct" id="Q9W445">
    <property type="interactions" value="4"/>
</dbReference>
<dbReference type="STRING" id="7227.FBpp0070832"/>
<dbReference type="PaxDb" id="7227-FBpp0070832"/>
<dbReference type="DNASU" id="31536"/>
<dbReference type="EnsemblMetazoa" id="FBtr0070867">
    <property type="protein sequence ID" value="FBpp0070832"/>
    <property type="gene ID" value="FBgn0029833"/>
</dbReference>
<dbReference type="EnsemblMetazoa" id="FBtr0305344">
    <property type="protein sequence ID" value="FBpp0293887"/>
    <property type="gene ID" value="FBgn0029833"/>
</dbReference>
<dbReference type="GeneID" id="31536"/>
<dbReference type="KEGG" id="dme:Dmel_CG5941"/>
<dbReference type="UCSC" id="CG5941-RA">
    <property type="organism name" value="d. melanogaster"/>
</dbReference>
<dbReference type="AGR" id="FB:FBgn0029833"/>
<dbReference type="CTD" id="28985"/>
<dbReference type="FlyBase" id="FBgn0029833">
    <property type="gene designation" value="MCTS1"/>
</dbReference>
<dbReference type="VEuPathDB" id="VectorBase:FBgn0029833"/>
<dbReference type="eggNOG" id="KOG2523">
    <property type="taxonomic scope" value="Eukaryota"/>
</dbReference>
<dbReference type="GeneTree" id="ENSGT00550000074964"/>
<dbReference type="HOGENOM" id="CLU_090468_0_1_1"/>
<dbReference type="InParanoid" id="Q9W445"/>
<dbReference type="OMA" id="GVENIHY"/>
<dbReference type="OrthoDB" id="10249667at2759"/>
<dbReference type="PhylomeDB" id="Q9W445"/>
<dbReference type="BioGRID-ORCS" id="31536">
    <property type="hits" value="1 hit in 1 CRISPR screen"/>
</dbReference>
<dbReference type="GenomeRNAi" id="31536"/>
<dbReference type="PRO" id="PR:Q9W445"/>
<dbReference type="Proteomes" id="UP000000803">
    <property type="component" value="Chromosome X"/>
</dbReference>
<dbReference type="Bgee" id="FBgn0029833">
    <property type="expression patterns" value="Expressed in T neuron T4b (Drosophila) in embryonic/larval optic lobe (Drosophila) and 137 other cell types or tissues"/>
</dbReference>
<dbReference type="GO" id="GO:0005737">
    <property type="term" value="C:cytoplasm"/>
    <property type="evidence" value="ECO:0007669"/>
    <property type="project" value="UniProtKB-SubCell"/>
</dbReference>
<dbReference type="GO" id="GO:0032991">
    <property type="term" value="C:protein-containing complex"/>
    <property type="evidence" value="ECO:0000353"/>
    <property type="project" value="FlyBase"/>
</dbReference>
<dbReference type="GO" id="GO:0003723">
    <property type="term" value="F:RNA binding"/>
    <property type="evidence" value="ECO:0007669"/>
    <property type="project" value="InterPro"/>
</dbReference>
<dbReference type="GO" id="GO:0001731">
    <property type="term" value="P:formation of translation preinitiation complex"/>
    <property type="evidence" value="ECO:0000318"/>
    <property type="project" value="GO_Central"/>
</dbReference>
<dbReference type="GO" id="GO:0006417">
    <property type="term" value="P:regulation of translation"/>
    <property type="evidence" value="ECO:0007669"/>
    <property type="project" value="UniProtKB-KW"/>
</dbReference>
<dbReference type="GO" id="GO:0002188">
    <property type="term" value="P:translation reinitiation"/>
    <property type="evidence" value="ECO:0000314"/>
    <property type="project" value="FlyBase"/>
</dbReference>
<dbReference type="CDD" id="cd11609">
    <property type="entry name" value="MCT1_N"/>
    <property type="match status" value="1"/>
</dbReference>
<dbReference type="CDD" id="cd21155">
    <property type="entry name" value="PUA_MCTS-1-like"/>
    <property type="match status" value="1"/>
</dbReference>
<dbReference type="FunFam" id="3.10.400.20:FF:000001">
    <property type="entry name" value="Malignant T-cell-amplified sequence 1"/>
    <property type="match status" value="1"/>
</dbReference>
<dbReference type="Gene3D" id="3.10.400.20">
    <property type="match status" value="1"/>
</dbReference>
<dbReference type="InterPro" id="IPR016437">
    <property type="entry name" value="MCT-1/Tma20"/>
</dbReference>
<dbReference type="InterPro" id="IPR041366">
    <property type="entry name" value="Pre-PUA"/>
</dbReference>
<dbReference type="InterPro" id="IPR002478">
    <property type="entry name" value="PUA"/>
</dbReference>
<dbReference type="InterPro" id="IPR015947">
    <property type="entry name" value="PUA-like_sf"/>
</dbReference>
<dbReference type="InterPro" id="IPR004521">
    <property type="entry name" value="Uncharacterised_CHP00451"/>
</dbReference>
<dbReference type="NCBIfam" id="TIGR00451">
    <property type="entry name" value="unchar_dom_2"/>
    <property type="match status" value="1"/>
</dbReference>
<dbReference type="PANTHER" id="PTHR22798:SF0">
    <property type="entry name" value="MALIGNANT T-CELL-AMPLIFIED SEQUENCE 1"/>
    <property type="match status" value="1"/>
</dbReference>
<dbReference type="PANTHER" id="PTHR22798">
    <property type="entry name" value="MCT-1 PROTEIN"/>
    <property type="match status" value="1"/>
</dbReference>
<dbReference type="Pfam" id="PF17832">
    <property type="entry name" value="Pre-PUA"/>
    <property type="match status" value="1"/>
</dbReference>
<dbReference type="Pfam" id="PF01472">
    <property type="entry name" value="PUA"/>
    <property type="match status" value="1"/>
</dbReference>
<dbReference type="PIRSF" id="PIRSF005067">
    <property type="entry name" value="Tma_RNA-bind_prd"/>
    <property type="match status" value="1"/>
</dbReference>
<dbReference type="SMART" id="SM00359">
    <property type="entry name" value="PUA"/>
    <property type="match status" value="1"/>
</dbReference>
<dbReference type="SUPFAM" id="SSF88697">
    <property type="entry name" value="PUA domain-like"/>
    <property type="match status" value="1"/>
</dbReference>
<dbReference type="PROSITE" id="PS50890">
    <property type="entry name" value="PUA"/>
    <property type="match status" value="1"/>
</dbReference>
<accession>Q9W445</accession>
<gene>
    <name evidence="8" type="primary">MCTS1</name>
    <name evidence="8" type="ORF">CG5941</name>
</gene>
<keyword id="KW-0963">Cytoplasm</keyword>
<keyword id="KW-1185">Reference proteome</keyword>
<keyword id="KW-0810">Translation regulation</keyword>
<reference evidence="6" key="1">
    <citation type="journal article" date="2000" name="Science">
        <title>The genome sequence of Drosophila melanogaster.</title>
        <authorList>
            <person name="Adams M.D."/>
            <person name="Celniker S.E."/>
            <person name="Holt R.A."/>
            <person name="Evans C.A."/>
            <person name="Gocayne J.D."/>
            <person name="Amanatides P.G."/>
            <person name="Scherer S.E."/>
            <person name="Li P.W."/>
            <person name="Hoskins R.A."/>
            <person name="Galle R.F."/>
            <person name="George R.A."/>
            <person name="Lewis S.E."/>
            <person name="Richards S."/>
            <person name="Ashburner M."/>
            <person name="Henderson S.N."/>
            <person name="Sutton G.G."/>
            <person name="Wortman J.R."/>
            <person name="Yandell M.D."/>
            <person name="Zhang Q."/>
            <person name="Chen L.X."/>
            <person name="Brandon R.C."/>
            <person name="Rogers Y.-H.C."/>
            <person name="Blazej R.G."/>
            <person name="Champe M."/>
            <person name="Pfeiffer B.D."/>
            <person name="Wan K.H."/>
            <person name="Doyle C."/>
            <person name="Baxter E.G."/>
            <person name="Helt G."/>
            <person name="Nelson C.R."/>
            <person name="Miklos G.L.G."/>
            <person name="Abril J.F."/>
            <person name="Agbayani A."/>
            <person name="An H.-J."/>
            <person name="Andrews-Pfannkoch C."/>
            <person name="Baldwin D."/>
            <person name="Ballew R.M."/>
            <person name="Basu A."/>
            <person name="Baxendale J."/>
            <person name="Bayraktaroglu L."/>
            <person name="Beasley E.M."/>
            <person name="Beeson K.Y."/>
            <person name="Benos P.V."/>
            <person name="Berman B.P."/>
            <person name="Bhandari D."/>
            <person name="Bolshakov S."/>
            <person name="Borkova D."/>
            <person name="Botchan M.R."/>
            <person name="Bouck J."/>
            <person name="Brokstein P."/>
            <person name="Brottier P."/>
            <person name="Burtis K.C."/>
            <person name="Busam D.A."/>
            <person name="Butler H."/>
            <person name="Cadieu E."/>
            <person name="Center A."/>
            <person name="Chandra I."/>
            <person name="Cherry J.M."/>
            <person name="Cawley S."/>
            <person name="Dahlke C."/>
            <person name="Davenport L.B."/>
            <person name="Davies P."/>
            <person name="de Pablos B."/>
            <person name="Delcher A."/>
            <person name="Deng Z."/>
            <person name="Mays A.D."/>
            <person name="Dew I."/>
            <person name="Dietz S.M."/>
            <person name="Dodson K."/>
            <person name="Doup L.E."/>
            <person name="Downes M."/>
            <person name="Dugan-Rocha S."/>
            <person name="Dunkov B.C."/>
            <person name="Dunn P."/>
            <person name="Durbin K.J."/>
            <person name="Evangelista C.C."/>
            <person name="Ferraz C."/>
            <person name="Ferriera S."/>
            <person name="Fleischmann W."/>
            <person name="Fosler C."/>
            <person name="Gabrielian A.E."/>
            <person name="Garg N.S."/>
            <person name="Gelbart W.M."/>
            <person name="Glasser K."/>
            <person name="Glodek A."/>
            <person name="Gong F."/>
            <person name="Gorrell J.H."/>
            <person name="Gu Z."/>
            <person name="Guan P."/>
            <person name="Harris M."/>
            <person name="Harris N.L."/>
            <person name="Harvey D.A."/>
            <person name="Heiman T.J."/>
            <person name="Hernandez J.R."/>
            <person name="Houck J."/>
            <person name="Hostin D."/>
            <person name="Houston K.A."/>
            <person name="Howland T.J."/>
            <person name="Wei M.-H."/>
            <person name="Ibegwam C."/>
            <person name="Jalali M."/>
            <person name="Kalush F."/>
            <person name="Karpen G.H."/>
            <person name="Ke Z."/>
            <person name="Kennison J.A."/>
            <person name="Ketchum K.A."/>
            <person name="Kimmel B.E."/>
            <person name="Kodira C.D."/>
            <person name="Kraft C.L."/>
            <person name="Kravitz S."/>
            <person name="Kulp D."/>
            <person name="Lai Z."/>
            <person name="Lasko P."/>
            <person name="Lei Y."/>
            <person name="Levitsky A.A."/>
            <person name="Li J.H."/>
            <person name="Li Z."/>
            <person name="Liang Y."/>
            <person name="Lin X."/>
            <person name="Liu X."/>
            <person name="Mattei B."/>
            <person name="McIntosh T.C."/>
            <person name="McLeod M.P."/>
            <person name="McPherson D."/>
            <person name="Merkulov G."/>
            <person name="Milshina N.V."/>
            <person name="Mobarry C."/>
            <person name="Morris J."/>
            <person name="Moshrefi A."/>
            <person name="Mount S.M."/>
            <person name="Moy M."/>
            <person name="Murphy B."/>
            <person name="Murphy L."/>
            <person name="Muzny D.M."/>
            <person name="Nelson D.L."/>
            <person name="Nelson D.R."/>
            <person name="Nelson K.A."/>
            <person name="Nixon K."/>
            <person name="Nusskern D.R."/>
            <person name="Pacleb J.M."/>
            <person name="Palazzolo M."/>
            <person name="Pittman G.S."/>
            <person name="Pan S."/>
            <person name="Pollard J."/>
            <person name="Puri V."/>
            <person name="Reese M.G."/>
            <person name="Reinert K."/>
            <person name="Remington K."/>
            <person name="Saunders R.D.C."/>
            <person name="Scheeler F."/>
            <person name="Shen H."/>
            <person name="Shue B.C."/>
            <person name="Siden-Kiamos I."/>
            <person name="Simpson M."/>
            <person name="Skupski M.P."/>
            <person name="Smith T.J."/>
            <person name="Spier E."/>
            <person name="Spradling A.C."/>
            <person name="Stapleton M."/>
            <person name="Strong R."/>
            <person name="Sun E."/>
            <person name="Svirskas R."/>
            <person name="Tector C."/>
            <person name="Turner R."/>
            <person name="Venter E."/>
            <person name="Wang A.H."/>
            <person name="Wang X."/>
            <person name="Wang Z.-Y."/>
            <person name="Wassarman D.A."/>
            <person name="Weinstock G.M."/>
            <person name="Weissenbach J."/>
            <person name="Williams S.M."/>
            <person name="Woodage T."/>
            <person name="Worley K.C."/>
            <person name="Wu D."/>
            <person name="Yang S."/>
            <person name="Yao Q.A."/>
            <person name="Ye J."/>
            <person name="Yeh R.-F."/>
            <person name="Zaveri J.S."/>
            <person name="Zhan M."/>
            <person name="Zhang G."/>
            <person name="Zhao Q."/>
            <person name="Zheng L."/>
            <person name="Zheng X.H."/>
            <person name="Zhong F.N."/>
            <person name="Zhong W."/>
            <person name="Zhou X."/>
            <person name="Zhu S.C."/>
            <person name="Zhu X."/>
            <person name="Smith H.O."/>
            <person name="Gibbs R.A."/>
            <person name="Myers E.W."/>
            <person name="Rubin G.M."/>
            <person name="Venter J.C."/>
        </authorList>
    </citation>
    <scope>NUCLEOTIDE SEQUENCE [LARGE SCALE GENOMIC DNA]</scope>
    <source>
        <strain>Berkeley</strain>
    </source>
</reference>
<reference evidence="6" key="2">
    <citation type="journal article" date="2002" name="Genome Biol.">
        <title>Annotation of the Drosophila melanogaster euchromatic genome: a systematic review.</title>
        <authorList>
            <person name="Misra S."/>
            <person name="Crosby M.A."/>
            <person name="Mungall C.J."/>
            <person name="Matthews B.B."/>
            <person name="Campbell K.S."/>
            <person name="Hradecky P."/>
            <person name="Huang Y."/>
            <person name="Kaminker J.S."/>
            <person name="Millburn G.H."/>
            <person name="Prochnik S.E."/>
            <person name="Smith C.D."/>
            <person name="Tupy J.L."/>
            <person name="Whitfield E.J."/>
            <person name="Bayraktaroglu L."/>
            <person name="Berman B.P."/>
            <person name="Bettencourt B.R."/>
            <person name="Celniker S.E."/>
            <person name="de Grey A.D.N.J."/>
            <person name="Drysdale R.A."/>
            <person name="Harris N.L."/>
            <person name="Richter J."/>
            <person name="Russo S."/>
            <person name="Schroeder A.J."/>
            <person name="Shu S.Q."/>
            <person name="Stapleton M."/>
            <person name="Yamada C."/>
            <person name="Ashburner M."/>
            <person name="Gelbart W.M."/>
            <person name="Rubin G.M."/>
            <person name="Lewis S.E."/>
        </authorList>
    </citation>
    <scope>GENOME REANNOTATION</scope>
    <source>
        <strain evidence="9">Berkeley</strain>
    </source>
</reference>
<reference evidence="7" key="3">
    <citation type="submission" date="2003-03" db="EMBL/GenBank/DDBJ databases">
        <authorList>
            <person name="Stapleton M."/>
            <person name="Brokstein P."/>
            <person name="Hong L."/>
            <person name="Agbayani A."/>
            <person name="Carlson J."/>
            <person name="Champe M."/>
            <person name="Chavez C."/>
            <person name="Dorsett V."/>
            <person name="Dresnek D."/>
            <person name="Farfan D."/>
            <person name="Frise E."/>
            <person name="George R."/>
            <person name="Gonzalez M."/>
            <person name="Guarin H."/>
            <person name="Kronmiller B."/>
            <person name="Li P."/>
            <person name="Liao G."/>
            <person name="Miranda A."/>
            <person name="Mungall C.J."/>
            <person name="Nunoo J."/>
            <person name="Pacleb J."/>
            <person name="Paragas V."/>
            <person name="Park S."/>
            <person name="Patel S."/>
            <person name="Phouanenavong S."/>
            <person name="Wan K."/>
            <person name="Yu C."/>
            <person name="Lewis S.E."/>
            <person name="Rubin G.M."/>
            <person name="Celniker S."/>
        </authorList>
    </citation>
    <scope>NUCLEOTIDE SEQUENCE [LARGE SCALE MRNA]</scope>
    <source>
        <strain evidence="7">Berkeley</strain>
        <tissue evidence="7">Embryo</tissue>
    </source>
</reference>
<reference evidence="5" key="4">
    <citation type="journal article" date="2014" name="Nature">
        <title>DENR-MCT-1 promotes translation re-initiation downstream of uORFs to control tissue growth.</title>
        <authorList>
            <person name="Schleich S."/>
            <person name="Strassburger K."/>
            <person name="Janiesch P.C."/>
            <person name="Koledachkina T."/>
            <person name="Miller K.K."/>
            <person name="Haneke K."/>
            <person name="Cheng Y.S."/>
            <person name="Kuchler K."/>
            <person name="Stoecklin G."/>
            <person name="Duncan K.E."/>
            <person name="Teleman A.A."/>
        </authorList>
    </citation>
    <scope>FUNCTION</scope>
    <scope>INTERACTION WITH DENR</scope>
    <scope>DISRUPTION PHENOTYPE</scope>
    <scope>MUTAGENESIS OF THR-82; THR-118; SER-119 AND THR-125</scope>
</reference>
<proteinExistence type="evidence at protein level"/>
<feature type="chain" id="PRO_0000432075" description="Malignant T-cell-amplified sequence 1 homolog" evidence="5">
    <location>
        <begin position="1"/>
        <end position="182"/>
    </location>
</feature>
<feature type="domain" description="PUA" evidence="2">
    <location>
        <begin position="93"/>
        <end position="172"/>
    </location>
</feature>
<feature type="mutagenesis site" description="No effect on translation regulation activity." evidence="3">
    <original>T</original>
    <variation>A</variation>
    <location>
        <position position="82"/>
    </location>
</feature>
<feature type="mutagenesis site" description="No effect on translation regulation activity. Reduced translation regulation activity; when associated with A-119." evidence="3">
    <original>T</original>
    <variation>A</variation>
    <location>
        <position position="118"/>
    </location>
</feature>
<feature type="mutagenesis site" description="Reduced translation regulation activity. Further reduced translation regulation activity; when associated with A-119." evidence="3">
    <original>S</original>
    <variation>A</variation>
    <location>
        <position position="119"/>
    </location>
</feature>
<feature type="mutagenesis site" description="No effect on translation regulation activity." evidence="3">
    <original>T</original>
    <variation>A</variation>
    <location>
        <position position="125"/>
    </location>
</feature>
<name>MCTS1_DROME</name>
<evidence type="ECO:0000255" key="1">
    <source>
        <dbReference type="PIRNR" id="PIRNR005067"/>
    </source>
</evidence>
<evidence type="ECO:0000255" key="2">
    <source>
        <dbReference type="PROSITE-ProRule" id="PRU00161"/>
    </source>
</evidence>
<evidence type="ECO:0000269" key="3">
    <source>
    </source>
</evidence>
<evidence type="ECO:0000303" key="4">
    <source>
    </source>
</evidence>
<evidence type="ECO:0000305" key="5"/>
<evidence type="ECO:0000312" key="6">
    <source>
        <dbReference type="EMBL" id="AAF46114.1"/>
    </source>
</evidence>
<evidence type="ECO:0000312" key="7">
    <source>
        <dbReference type="EMBL" id="AAK93310.1"/>
    </source>
</evidence>
<evidence type="ECO:0000312" key="8">
    <source>
        <dbReference type="FlyBase" id="FBgn0029833"/>
    </source>
</evidence>
<evidence type="ECO:0000312" key="9">
    <source>
        <dbReference type="Proteomes" id="UP000000803"/>
    </source>
</evidence>